<name>HSLO_STRP9</name>
<accession>P0C0C4</accession>
<accession>Q9ZB45</accession>
<gene>
    <name evidence="1" type="primary">hslO</name>
</gene>
<comment type="function">
    <text evidence="1">Redox regulated molecular chaperone. Protects both thermally unfolding and oxidatively damaged proteins from irreversible aggregation. Plays an important role in the bacterial defense system toward oxidative stress.</text>
</comment>
<comment type="subcellular location">
    <subcellularLocation>
        <location evidence="1">Cytoplasm</location>
    </subcellularLocation>
</comment>
<comment type="PTM">
    <text evidence="1">Under oxidizing conditions two disulfide bonds are formed involving the reactive cysteines. Under reducing conditions zinc is bound to the reactive cysteines and the protein is inactive.</text>
</comment>
<comment type="similarity">
    <text evidence="1">Belongs to the HSP33 family.</text>
</comment>
<comment type="sequence caution" evidence="2">
    <conflict type="frameshift">
        <sequence resource="EMBL-CDS" id="AAC97154"/>
    </conflict>
</comment>
<keyword id="KW-0143">Chaperone</keyword>
<keyword id="KW-0963">Cytoplasm</keyword>
<keyword id="KW-1015">Disulfide bond</keyword>
<keyword id="KW-0676">Redox-active center</keyword>
<keyword id="KW-0862">Zinc</keyword>
<protein>
    <recommendedName>
        <fullName evidence="1">33 kDa chaperonin</fullName>
    </recommendedName>
    <alternativeName>
        <fullName evidence="1">Heat shock protein 33 homolog</fullName>
        <shortName evidence="1">HSP33</shortName>
    </alternativeName>
</protein>
<reference key="1">
    <citation type="journal article" date="1999" name="Mol. Microbiol.">
        <title>Characterization of nra, a global negative regulator gene in group A streptococci.</title>
        <authorList>
            <person name="Podbielski A."/>
            <person name="Woischnik M."/>
            <person name="Leonard B.A.B."/>
            <person name="Schmidt K.H."/>
        </authorList>
    </citation>
    <scope>NUCLEOTIDE SEQUENCE [GENOMIC DNA]</scope>
    <source>
        <strain>CS101 / Serotype M49</strain>
    </source>
</reference>
<sequence length="290" mass="31582">MDKIIKSIAQSGAFRAYVLDSTETVALAQEKHNTLSSSTVALGRTLIANQILAANQKGDSKITVKVIGDSSFGHIISVADTKGHVKGYIQNTGVDIKKTETGEVLVGPFMGNGHFVTIIDYGTGNPYTSTTPLITGEIGEDFAYYLTESEQTPSAIGLNVLLDENDKVKVAGGFMVQVLPEASEEEIARYEKRLQEMPAISHLLASKNHVDALLEAIYGDEPYKRLSEEPLSFQCDCSRERFEAALMTLPKADLQAMIDEDKGAEIVCQFCGTKYQFNESDLEAIISDKA</sequence>
<evidence type="ECO:0000255" key="1">
    <source>
        <dbReference type="HAMAP-Rule" id="MF_00117"/>
    </source>
</evidence>
<evidence type="ECO:0000305" key="2"/>
<organism>
    <name type="scientific">Streptococcus pyogenes serotype M49</name>
    <dbReference type="NCBI Taxonomy" id="301452"/>
    <lineage>
        <taxon>Bacteria</taxon>
        <taxon>Bacillati</taxon>
        <taxon>Bacillota</taxon>
        <taxon>Bacilli</taxon>
        <taxon>Lactobacillales</taxon>
        <taxon>Streptococcaceae</taxon>
        <taxon>Streptococcus</taxon>
    </lineage>
</organism>
<feature type="chain" id="PRO_0000192216" description="33 kDa chaperonin">
    <location>
        <begin position="1"/>
        <end position="290"/>
    </location>
</feature>
<feature type="disulfide bond" description="Redox-active" evidence="1">
    <location>
        <begin position="235"/>
        <end position="237"/>
    </location>
</feature>
<feature type="disulfide bond" description="Redox-active" evidence="1">
    <location>
        <begin position="268"/>
        <end position="271"/>
    </location>
</feature>
<proteinExistence type="inferred from homology"/>
<dbReference type="EMBL" id="U49397">
    <property type="protein sequence ID" value="AAC97154.1"/>
    <property type="status" value="ALT_FRAME"/>
    <property type="molecule type" value="Genomic_DNA"/>
</dbReference>
<dbReference type="SMR" id="P0C0C4"/>
<dbReference type="GO" id="GO:0005737">
    <property type="term" value="C:cytoplasm"/>
    <property type="evidence" value="ECO:0007669"/>
    <property type="project" value="UniProtKB-SubCell"/>
</dbReference>
<dbReference type="GO" id="GO:0044183">
    <property type="term" value="F:protein folding chaperone"/>
    <property type="evidence" value="ECO:0007669"/>
    <property type="project" value="TreeGrafter"/>
</dbReference>
<dbReference type="GO" id="GO:0051082">
    <property type="term" value="F:unfolded protein binding"/>
    <property type="evidence" value="ECO:0007669"/>
    <property type="project" value="UniProtKB-UniRule"/>
</dbReference>
<dbReference type="GO" id="GO:0042026">
    <property type="term" value="P:protein refolding"/>
    <property type="evidence" value="ECO:0007669"/>
    <property type="project" value="TreeGrafter"/>
</dbReference>
<dbReference type="CDD" id="cd00498">
    <property type="entry name" value="Hsp33"/>
    <property type="match status" value="1"/>
</dbReference>
<dbReference type="Gene3D" id="3.55.30.10">
    <property type="entry name" value="Hsp33 domain"/>
    <property type="match status" value="1"/>
</dbReference>
<dbReference type="Gene3D" id="3.90.1280.10">
    <property type="entry name" value="HSP33 redox switch-like"/>
    <property type="match status" value="1"/>
</dbReference>
<dbReference type="HAMAP" id="MF_00117">
    <property type="entry name" value="HslO"/>
    <property type="match status" value="1"/>
</dbReference>
<dbReference type="InterPro" id="IPR000397">
    <property type="entry name" value="Heat_shock_Hsp33"/>
</dbReference>
<dbReference type="InterPro" id="IPR016154">
    <property type="entry name" value="Heat_shock_Hsp33_C"/>
</dbReference>
<dbReference type="InterPro" id="IPR016153">
    <property type="entry name" value="Heat_shock_Hsp33_N"/>
</dbReference>
<dbReference type="NCBIfam" id="NF001033">
    <property type="entry name" value="PRK00114.1"/>
    <property type="match status" value="1"/>
</dbReference>
<dbReference type="PANTHER" id="PTHR30111">
    <property type="entry name" value="33 KDA CHAPERONIN"/>
    <property type="match status" value="1"/>
</dbReference>
<dbReference type="PANTHER" id="PTHR30111:SF1">
    <property type="entry name" value="33 KDA CHAPERONIN"/>
    <property type="match status" value="1"/>
</dbReference>
<dbReference type="Pfam" id="PF01430">
    <property type="entry name" value="HSP33"/>
    <property type="match status" value="1"/>
</dbReference>
<dbReference type="PIRSF" id="PIRSF005261">
    <property type="entry name" value="Heat_shock_Hsp33"/>
    <property type="match status" value="1"/>
</dbReference>
<dbReference type="SUPFAM" id="SSF64397">
    <property type="entry name" value="Hsp33 domain"/>
    <property type="match status" value="1"/>
</dbReference>
<dbReference type="SUPFAM" id="SSF118352">
    <property type="entry name" value="HSP33 redox switch-like"/>
    <property type="match status" value="1"/>
</dbReference>